<protein>
    <recommendedName>
        <fullName evidence="1">Phosphoglycerate kinase</fullName>
        <ecNumber evidence="1">2.7.2.3</ecNumber>
    </recommendedName>
</protein>
<name>PGK_BUCBP</name>
<feature type="chain" id="PRO_0000145920" description="Phosphoglycerate kinase">
    <location>
        <begin position="1"/>
        <end position="393"/>
    </location>
</feature>
<feature type="binding site" evidence="1">
    <location>
        <begin position="21"/>
        <end position="23"/>
    </location>
    <ligand>
        <name>substrate</name>
    </ligand>
</feature>
<feature type="binding site" evidence="1">
    <location>
        <position position="36"/>
    </location>
    <ligand>
        <name>substrate</name>
    </ligand>
</feature>
<feature type="binding site" evidence="1">
    <location>
        <begin position="59"/>
        <end position="62"/>
    </location>
    <ligand>
        <name>substrate</name>
    </ligand>
</feature>
<feature type="binding site" evidence="1">
    <location>
        <position position="114"/>
    </location>
    <ligand>
        <name>substrate</name>
    </ligand>
</feature>
<feature type="binding site" evidence="1">
    <location>
        <position position="147"/>
    </location>
    <ligand>
        <name>substrate</name>
    </ligand>
</feature>
<feature type="binding site" evidence="1">
    <location>
        <position position="198"/>
    </location>
    <ligand>
        <name>ATP</name>
        <dbReference type="ChEBI" id="CHEBI:30616"/>
    </ligand>
</feature>
<feature type="binding site" evidence="1">
    <location>
        <position position="314"/>
    </location>
    <ligand>
        <name>ATP</name>
        <dbReference type="ChEBI" id="CHEBI:30616"/>
    </ligand>
</feature>
<feature type="binding site" evidence="1">
    <location>
        <begin position="340"/>
        <end position="343"/>
    </location>
    <ligand>
        <name>ATP</name>
        <dbReference type="ChEBI" id="CHEBI:30616"/>
    </ligand>
</feature>
<keyword id="KW-0067">ATP-binding</keyword>
<keyword id="KW-0963">Cytoplasm</keyword>
<keyword id="KW-0324">Glycolysis</keyword>
<keyword id="KW-0418">Kinase</keyword>
<keyword id="KW-0547">Nucleotide-binding</keyword>
<keyword id="KW-1185">Reference proteome</keyword>
<keyword id="KW-0808">Transferase</keyword>
<accession>P59461</accession>
<sequence>MSIIKITDLNLLNKKVLIRSDLNVPIKNNKISSYARIHASLPTIKFALKNLAKVIVTSHLGRPTEGIYKKKFSLFPVFKYFKKILPETNIYFSQNLTECSSIKSGELIILENVRFNQGEKENSKILSKKYATLCDIFVMDAFGAIHRNEASTNGIIKYAKLACSGLLLESELKTLNSALTNPVRPMVAIVGGAKVSTKFKTLTTLAKISDTLIVGGGIANTFISIDHNIGKSLHDPKFIEQAKILKEKYNIFIPTDSRVSTTFTYDSIATIKSTSDIHANEEIMDFGDISIKNMINIIKKAKTILWNGPIGVFEFKNFSKGTEQLSKAIASSDAFSIAGGGDTLSVVEMFKVQNNISYLSTGGGSFLKFLEGNKFRIIELLEKHFNKFKNNNF</sequence>
<organism>
    <name type="scientific">Buchnera aphidicola subsp. Baizongia pistaciae (strain Bp)</name>
    <dbReference type="NCBI Taxonomy" id="224915"/>
    <lineage>
        <taxon>Bacteria</taxon>
        <taxon>Pseudomonadati</taxon>
        <taxon>Pseudomonadota</taxon>
        <taxon>Gammaproteobacteria</taxon>
        <taxon>Enterobacterales</taxon>
        <taxon>Erwiniaceae</taxon>
        <taxon>Buchnera</taxon>
    </lineage>
</organism>
<proteinExistence type="inferred from homology"/>
<gene>
    <name evidence="1" type="primary">pgk</name>
    <name type="ordered locus">bbp_400</name>
</gene>
<comment type="catalytic activity">
    <reaction evidence="1">
        <text>(2R)-3-phosphoglycerate + ATP = (2R)-3-phospho-glyceroyl phosphate + ADP</text>
        <dbReference type="Rhea" id="RHEA:14801"/>
        <dbReference type="ChEBI" id="CHEBI:30616"/>
        <dbReference type="ChEBI" id="CHEBI:57604"/>
        <dbReference type="ChEBI" id="CHEBI:58272"/>
        <dbReference type="ChEBI" id="CHEBI:456216"/>
        <dbReference type="EC" id="2.7.2.3"/>
    </reaction>
</comment>
<comment type="pathway">
    <text evidence="1">Carbohydrate degradation; glycolysis; pyruvate from D-glyceraldehyde 3-phosphate: step 2/5.</text>
</comment>
<comment type="subunit">
    <text evidence="1">Monomer.</text>
</comment>
<comment type="subcellular location">
    <subcellularLocation>
        <location evidence="1">Cytoplasm</location>
    </subcellularLocation>
</comment>
<comment type="similarity">
    <text evidence="1">Belongs to the phosphoglycerate kinase family.</text>
</comment>
<dbReference type="EC" id="2.7.2.3" evidence="1"/>
<dbReference type="EMBL" id="AE016826">
    <property type="protein sequence ID" value="AAO27112.1"/>
    <property type="molecule type" value="Genomic_DNA"/>
</dbReference>
<dbReference type="RefSeq" id="WP_011091513.1">
    <property type="nucleotide sequence ID" value="NC_004545.1"/>
</dbReference>
<dbReference type="SMR" id="P59461"/>
<dbReference type="STRING" id="224915.bbp_400"/>
<dbReference type="KEGG" id="bab:bbp_400"/>
<dbReference type="eggNOG" id="COG0126">
    <property type="taxonomic scope" value="Bacteria"/>
</dbReference>
<dbReference type="HOGENOM" id="CLU_025427_0_2_6"/>
<dbReference type="OrthoDB" id="9808460at2"/>
<dbReference type="UniPathway" id="UPA00109">
    <property type="reaction ID" value="UER00185"/>
</dbReference>
<dbReference type="Proteomes" id="UP000000601">
    <property type="component" value="Chromosome"/>
</dbReference>
<dbReference type="GO" id="GO:0005829">
    <property type="term" value="C:cytosol"/>
    <property type="evidence" value="ECO:0007669"/>
    <property type="project" value="TreeGrafter"/>
</dbReference>
<dbReference type="GO" id="GO:0043531">
    <property type="term" value="F:ADP binding"/>
    <property type="evidence" value="ECO:0007669"/>
    <property type="project" value="TreeGrafter"/>
</dbReference>
<dbReference type="GO" id="GO:0005524">
    <property type="term" value="F:ATP binding"/>
    <property type="evidence" value="ECO:0007669"/>
    <property type="project" value="UniProtKB-KW"/>
</dbReference>
<dbReference type="GO" id="GO:0004618">
    <property type="term" value="F:phosphoglycerate kinase activity"/>
    <property type="evidence" value="ECO:0007669"/>
    <property type="project" value="UniProtKB-UniRule"/>
</dbReference>
<dbReference type="GO" id="GO:0006094">
    <property type="term" value="P:gluconeogenesis"/>
    <property type="evidence" value="ECO:0007669"/>
    <property type="project" value="TreeGrafter"/>
</dbReference>
<dbReference type="GO" id="GO:0006096">
    <property type="term" value="P:glycolytic process"/>
    <property type="evidence" value="ECO:0007669"/>
    <property type="project" value="UniProtKB-UniRule"/>
</dbReference>
<dbReference type="FunFam" id="3.40.50.1260:FF:000001">
    <property type="entry name" value="Phosphoglycerate kinase"/>
    <property type="match status" value="1"/>
</dbReference>
<dbReference type="FunFam" id="3.40.50.1260:FF:000002">
    <property type="entry name" value="Phosphoglycerate kinase"/>
    <property type="match status" value="1"/>
</dbReference>
<dbReference type="Gene3D" id="3.40.50.1260">
    <property type="entry name" value="Phosphoglycerate kinase, N-terminal domain"/>
    <property type="match status" value="2"/>
</dbReference>
<dbReference type="HAMAP" id="MF_00145">
    <property type="entry name" value="Phosphoglyc_kinase"/>
    <property type="match status" value="1"/>
</dbReference>
<dbReference type="InterPro" id="IPR001576">
    <property type="entry name" value="Phosphoglycerate_kinase"/>
</dbReference>
<dbReference type="InterPro" id="IPR015911">
    <property type="entry name" value="Phosphoglycerate_kinase_CS"/>
</dbReference>
<dbReference type="InterPro" id="IPR015824">
    <property type="entry name" value="Phosphoglycerate_kinase_N"/>
</dbReference>
<dbReference type="InterPro" id="IPR036043">
    <property type="entry name" value="Phosphoglycerate_kinase_sf"/>
</dbReference>
<dbReference type="PANTHER" id="PTHR11406">
    <property type="entry name" value="PHOSPHOGLYCERATE KINASE"/>
    <property type="match status" value="1"/>
</dbReference>
<dbReference type="PANTHER" id="PTHR11406:SF23">
    <property type="entry name" value="PHOSPHOGLYCERATE KINASE 1, CHLOROPLASTIC-RELATED"/>
    <property type="match status" value="1"/>
</dbReference>
<dbReference type="Pfam" id="PF00162">
    <property type="entry name" value="PGK"/>
    <property type="match status" value="1"/>
</dbReference>
<dbReference type="PIRSF" id="PIRSF000724">
    <property type="entry name" value="Pgk"/>
    <property type="match status" value="1"/>
</dbReference>
<dbReference type="PRINTS" id="PR00477">
    <property type="entry name" value="PHGLYCKINASE"/>
</dbReference>
<dbReference type="SUPFAM" id="SSF53748">
    <property type="entry name" value="Phosphoglycerate kinase"/>
    <property type="match status" value="1"/>
</dbReference>
<dbReference type="PROSITE" id="PS00111">
    <property type="entry name" value="PGLYCERATE_KINASE"/>
    <property type="match status" value="1"/>
</dbReference>
<evidence type="ECO:0000255" key="1">
    <source>
        <dbReference type="HAMAP-Rule" id="MF_00145"/>
    </source>
</evidence>
<reference key="1">
    <citation type="journal article" date="2003" name="Proc. Natl. Acad. Sci. U.S.A.">
        <title>Reductive genome evolution in Buchnera aphidicola.</title>
        <authorList>
            <person name="van Ham R.C.H.J."/>
            <person name="Kamerbeek J."/>
            <person name="Palacios C."/>
            <person name="Rausell C."/>
            <person name="Abascal F."/>
            <person name="Bastolla U."/>
            <person name="Fernandez J.M."/>
            <person name="Jimenez L."/>
            <person name="Postigo M."/>
            <person name="Silva F.J."/>
            <person name="Tamames J."/>
            <person name="Viguera E."/>
            <person name="Latorre A."/>
            <person name="Valencia A."/>
            <person name="Moran F."/>
            <person name="Moya A."/>
        </authorList>
    </citation>
    <scope>NUCLEOTIDE SEQUENCE [LARGE SCALE GENOMIC DNA]</scope>
    <source>
        <strain>Bp</strain>
    </source>
</reference>